<feature type="chain" id="PRO_0000129691" description="Large ribosomal subunit protein uL2cz/uL2cy">
    <location>
        <begin position="1"/>
        <end position="274"/>
    </location>
</feature>
<feature type="region of interest" description="Disordered" evidence="3">
    <location>
        <begin position="224"/>
        <end position="274"/>
    </location>
</feature>
<comment type="subunit">
    <text evidence="1">Part of the 50S ribosomal subunit.</text>
</comment>
<comment type="subcellular location">
    <subcellularLocation>
        <location>Plastid</location>
        <location>Chloroplast</location>
    </subcellularLocation>
</comment>
<comment type="similarity">
    <text evidence="4">Belongs to the universal ribosomal protein uL2 family.</text>
</comment>
<dbReference type="EMBL" id="AY582139">
    <property type="protein sequence ID" value="AAT98575.1"/>
    <property type="molecule type" value="Genomic_DNA"/>
</dbReference>
<dbReference type="EMBL" id="AY582139">
    <property type="protein sequence ID" value="AAT98550.1"/>
    <property type="molecule type" value="Genomic_DNA"/>
</dbReference>
<dbReference type="SMR" id="Q68RU2"/>
<dbReference type="GO" id="GO:0009507">
    <property type="term" value="C:chloroplast"/>
    <property type="evidence" value="ECO:0007669"/>
    <property type="project" value="UniProtKB-SubCell"/>
</dbReference>
<dbReference type="GO" id="GO:0005762">
    <property type="term" value="C:mitochondrial large ribosomal subunit"/>
    <property type="evidence" value="ECO:0007669"/>
    <property type="project" value="TreeGrafter"/>
</dbReference>
<dbReference type="GO" id="GO:0019843">
    <property type="term" value="F:rRNA binding"/>
    <property type="evidence" value="ECO:0007669"/>
    <property type="project" value="UniProtKB-UniRule"/>
</dbReference>
<dbReference type="GO" id="GO:0003735">
    <property type="term" value="F:structural constituent of ribosome"/>
    <property type="evidence" value="ECO:0007669"/>
    <property type="project" value="InterPro"/>
</dbReference>
<dbReference type="GO" id="GO:0016740">
    <property type="term" value="F:transferase activity"/>
    <property type="evidence" value="ECO:0007669"/>
    <property type="project" value="InterPro"/>
</dbReference>
<dbReference type="GO" id="GO:0032543">
    <property type="term" value="P:mitochondrial translation"/>
    <property type="evidence" value="ECO:0007669"/>
    <property type="project" value="TreeGrafter"/>
</dbReference>
<dbReference type="FunFam" id="4.10.950.10:FF:000001">
    <property type="entry name" value="50S ribosomal protein L2"/>
    <property type="match status" value="1"/>
</dbReference>
<dbReference type="FunFam" id="2.30.30.30:FF:000008">
    <property type="entry name" value="50S ribosomal protein L2, chloroplastic"/>
    <property type="match status" value="1"/>
</dbReference>
<dbReference type="FunFam" id="2.40.50.140:FF:000029">
    <property type="entry name" value="50S ribosomal protein L2, chloroplastic"/>
    <property type="match status" value="1"/>
</dbReference>
<dbReference type="Gene3D" id="2.30.30.30">
    <property type="match status" value="1"/>
</dbReference>
<dbReference type="Gene3D" id="2.40.50.140">
    <property type="entry name" value="Nucleic acid-binding proteins"/>
    <property type="match status" value="1"/>
</dbReference>
<dbReference type="Gene3D" id="4.10.950.10">
    <property type="entry name" value="Ribosomal protein L2, domain 3"/>
    <property type="match status" value="1"/>
</dbReference>
<dbReference type="HAMAP" id="MF_01320_B">
    <property type="entry name" value="Ribosomal_uL2_B"/>
    <property type="match status" value="1"/>
</dbReference>
<dbReference type="InterPro" id="IPR012340">
    <property type="entry name" value="NA-bd_OB-fold"/>
</dbReference>
<dbReference type="InterPro" id="IPR014722">
    <property type="entry name" value="Rib_uL2_dom2"/>
</dbReference>
<dbReference type="InterPro" id="IPR002171">
    <property type="entry name" value="Ribosomal_uL2"/>
</dbReference>
<dbReference type="InterPro" id="IPR005880">
    <property type="entry name" value="Ribosomal_uL2_bac/org-type"/>
</dbReference>
<dbReference type="InterPro" id="IPR022669">
    <property type="entry name" value="Ribosomal_uL2_C"/>
</dbReference>
<dbReference type="InterPro" id="IPR022671">
    <property type="entry name" value="Ribosomal_uL2_CS"/>
</dbReference>
<dbReference type="InterPro" id="IPR014726">
    <property type="entry name" value="Ribosomal_uL2_dom3"/>
</dbReference>
<dbReference type="InterPro" id="IPR022666">
    <property type="entry name" value="Ribosomal_uL2_RNA-bd_dom"/>
</dbReference>
<dbReference type="InterPro" id="IPR008991">
    <property type="entry name" value="Translation_prot_SH3-like_sf"/>
</dbReference>
<dbReference type="NCBIfam" id="TIGR01171">
    <property type="entry name" value="rplB_bact"/>
    <property type="match status" value="1"/>
</dbReference>
<dbReference type="PANTHER" id="PTHR13691:SF5">
    <property type="entry name" value="LARGE RIBOSOMAL SUBUNIT PROTEIN UL2M"/>
    <property type="match status" value="1"/>
</dbReference>
<dbReference type="PANTHER" id="PTHR13691">
    <property type="entry name" value="RIBOSOMAL PROTEIN L2"/>
    <property type="match status" value="1"/>
</dbReference>
<dbReference type="Pfam" id="PF00181">
    <property type="entry name" value="Ribosomal_L2"/>
    <property type="match status" value="1"/>
</dbReference>
<dbReference type="Pfam" id="PF03947">
    <property type="entry name" value="Ribosomal_L2_C"/>
    <property type="match status" value="1"/>
</dbReference>
<dbReference type="PIRSF" id="PIRSF002158">
    <property type="entry name" value="Ribosomal_L2"/>
    <property type="match status" value="1"/>
</dbReference>
<dbReference type="SMART" id="SM01383">
    <property type="entry name" value="Ribosomal_L2"/>
    <property type="match status" value="1"/>
</dbReference>
<dbReference type="SMART" id="SM01382">
    <property type="entry name" value="Ribosomal_L2_C"/>
    <property type="match status" value="1"/>
</dbReference>
<dbReference type="SUPFAM" id="SSF50249">
    <property type="entry name" value="Nucleic acid-binding proteins"/>
    <property type="match status" value="1"/>
</dbReference>
<dbReference type="SUPFAM" id="SSF50104">
    <property type="entry name" value="Translation proteins SH3-like domain"/>
    <property type="match status" value="1"/>
</dbReference>
<dbReference type="PROSITE" id="PS00467">
    <property type="entry name" value="RIBOSOMAL_L2"/>
    <property type="match status" value="1"/>
</dbReference>
<name>RK2_PANGI</name>
<sequence>MAIHLYKTSTPSTRNRAVDSQVKSNPRNNLIYGQHHCGKGRNARGIITAGHRGGGHKRLYRKIDFRRNEKDIYGRIVTIEYDPNRNAYICLIHYGDGEKRYILHPRGAIIGDTIVSGTEVPIKMGNALPLTDMPLGTAIHNIEITRGKGGQLARAAGAVAKLIAKEGKSATLKLPSGEVRLISKNCSATVGQVGNVGVNQKSLGRAGSKRWLGKRPVVRGVVMNPVDHPHGGGEGRAPIGRKKPTTPWGYPALGRRSRKRNKYSDNLILRRRSK</sequence>
<keyword id="KW-0150">Chloroplast</keyword>
<keyword id="KW-0934">Plastid</keyword>
<keyword id="KW-0687">Ribonucleoprotein</keyword>
<keyword id="KW-0689">Ribosomal protein</keyword>
<evidence type="ECO:0000250" key="1"/>
<evidence type="ECO:0000255" key="2">
    <source>
        <dbReference type="HAMAP-Rule" id="MF_01320"/>
    </source>
</evidence>
<evidence type="ECO:0000256" key="3">
    <source>
        <dbReference type="SAM" id="MobiDB-lite"/>
    </source>
</evidence>
<evidence type="ECO:0000305" key="4"/>
<accession>Q68RU2</accession>
<proteinExistence type="inferred from homology"/>
<reference key="1">
    <citation type="journal article" date="2004" name="DNA Res.">
        <title>Complete chloroplast genome sequence from Korea ginseng (Panax schinseng Nees) and comparative analysis of sequence evolution among 17 vascular plants.</title>
        <authorList>
            <person name="Kim K.-J."/>
            <person name="Lee H.-L."/>
        </authorList>
    </citation>
    <scope>NUCLEOTIDE SEQUENCE [LARGE SCALE GENOMIC DNA]</scope>
</reference>
<gene>
    <name type="primary">rpl2-A</name>
    <name type="ORF">PSC0862</name>
</gene>
<gene>
    <name type="primary">rpl2-B</name>
    <name type="ORF">PSC1547</name>
</gene>
<geneLocation type="chloroplast"/>
<organism>
    <name type="scientific">Panax ginseng</name>
    <name type="common">Korean ginseng</name>
    <dbReference type="NCBI Taxonomy" id="4054"/>
    <lineage>
        <taxon>Eukaryota</taxon>
        <taxon>Viridiplantae</taxon>
        <taxon>Streptophyta</taxon>
        <taxon>Embryophyta</taxon>
        <taxon>Tracheophyta</taxon>
        <taxon>Spermatophyta</taxon>
        <taxon>Magnoliopsida</taxon>
        <taxon>eudicotyledons</taxon>
        <taxon>Gunneridae</taxon>
        <taxon>Pentapetalae</taxon>
        <taxon>asterids</taxon>
        <taxon>campanulids</taxon>
        <taxon>Apiales</taxon>
        <taxon>Araliaceae</taxon>
        <taxon>Panax</taxon>
    </lineage>
</organism>
<protein>
    <recommendedName>
        <fullName evidence="2">Large ribosomal subunit protein uL2cz/uL2cy</fullName>
    </recommendedName>
    <alternativeName>
        <fullName evidence="4">50S ribosomal protein L2, chloroplastic</fullName>
    </alternativeName>
</protein>